<reference key="1">
    <citation type="journal article" date="2008" name="J. Bacteriol.">
        <title>Complete genome sequence of Neisseria gonorrhoeae NCCP11945.</title>
        <authorList>
            <person name="Chung G.T."/>
            <person name="Yoo J.S."/>
            <person name="Oh H.B."/>
            <person name="Lee Y.S."/>
            <person name="Cha S.H."/>
            <person name="Kim S.J."/>
            <person name="Yoo C.K."/>
        </authorList>
    </citation>
    <scope>NUCLEOTIDE SEQUENCE [LARGE SCALE GENOMIC DNA]</scope>
    <source>
        <strain>NCCP11945</strain>
    </source>
</reference>
<protein>
    <recommendedName>
        <fullName evidence="1">NADH-quinone oxidoreductase subunit C</fullName>
        <ecNumber evidence="1">7.1.1.-</ecNumber>
    </recommendedName>
    <alternativeName>
        <fullName evidence="1">NADH dehydrogenase I subunit C</fullName>
    </alternativeName>
    <alternativeName>
        <fullName evidence="1">NDH-1 subunit C</fullName>
    </alternativeName>
</protein>
<sequence>MASIQNLYETVVGVLGDQAGKVISALGEITVECLPEHYISVMTALHDHEDLHFELLVDLCGVDYSTYKNEAWQGKRFAVVSQLLSVKNNQRIRVRVWVSDDDFPVVESVADIYNSADWYEREAFDLYGIMFNNHPDLRRILTDYGFVGHPFRKDFPISGYVEMRYDEEQKRVIYQPVTIEPREITPRIVREENYGGQ</sequence>
<gene>
    <name evidence="1" type="primary">nuoC</name>
    <name type="ordered locus">NGK_2151</name>
</gene>
<name>NUOC_NEIG2</name>
<accession>B4RPI2</accession>
<organism>
    <name type="scientific">Neisseria gonorrhoeae (strain NCCP11945)</name>
    <dbReference type="NCBI Taxonomy" id="521006"/>
    <lineage>
        <taxon>Bacteria</taxon>
        <taxon>Pseudomonadati</taxon>
        <taxon>Pseudomonadota</taxon>
        <taxon>Betaproteobacteria</taxon>
        <taxon>Neisseriales</taxon>
        <taxon>Neisseriaceae</taxon>
        <taxon>Neisseria</taxon>
    </lineage>
</organism>
<dbReference type="EC" id="7.1.1.-" evidence="1"/>
<dbReference type="EMBL" id="CP001050">
    <property type="protein sequence ID" value="ACF30759.1"/>
    <property type="molecule type" value="Genomic_DNA"/>
</dbReference>
<dbReference type="RefSeq" id="WP_003689952.1">
    <property type="nucleotide sequence ID" value="NC_011035.1"/>
</dbReference>
<dbReference type="SMR" id="B4RPI2"/>
<dbReference type="KEGG" id="ngk:NGK_2151"/>
<dbReference type="HOGENOM" id="CLU_042628_2_1_4"/>
<dbReference type="Proteomes" id="UP000002564">
    <property type="component" value="Chromosome"/>
</dbReference>
<dbReference type="GO" id="GO:0005886">
    <property type="term" value="C:plasma membrane"/>
    <property type="evidence" value="ECO:0007669"/>
    <property type="project" value="UniProtKB-SubCell"/>
</dbReference>
<dbReference type="GO" id="GO:0008137">
    <property type="term" value="F:NADH dehydrogenase (ubiquinone) activity"/>
    <property type="evidence" value="ECO:0007669"/>
    <property type="project" value="InterPro"/>
</dbReference>
<dbReference type="GO" id="GO:0050136">
    <property type="term" value="F:NADH:ubiquinone reductase (non-electrogenic) activity"/>
    <property type="evidence" value="ECO:0007669"/>
    <property type="project" value="UniProtKB-UniRule"/>
</dbReference>
<dbReference type="GO" id="GO:0048038">
    <property type="term" value="F:quinone binding"/>
    <property type="evidence" value="ECO:0007669"/>
    <property type="project" value="UniProtKB-KW"/>
</dbReference>
<dbReference type="Gene3D" id="3.30.460.80">
    <property type="entry name" value="NADH:ubiquinone oxidoreductase, 30kDa subunit"/>
    <property type="match status" value="1"/>
</dbReference>
<dbReference type="HAMAP" id="MF_01357">
    <property type="entry name" value="NDH1_NuoC"/>
    <property type="match status" value="1"/>
</dbReference>
<dbReference type="InterPro" id="IPR010218">
    <property type="entry name" value="NADH_DH_suC"/>
</dbReference>
<dbReference type="InterPro" id="IPR037232">
    <property type="entry name" value="NADH_quin_OxRdtase_su_C/D-like"/>
</dbReference>
<dbReference type="InterPro" id="IPR001268">
    <property type="entry name" value="NADH_UbQ_OxRdtase_30kDa_su"/>
</dbReference>
<dbReference type="InterPro" id="IPR020396">
    <property type="entry name" value="NADH_UbQ_OxRdtase_CS"/>
</dbReference>
<dbReference type="NCBIfam" id="TIGR01961">
    <property type="entry name" value="NuoC_fam"/>
    <property type="match status" value="1"/>
</dbReference>
<dbReference type="NCBIfam" id="NF004730">
    <property type="entry name" value="PRK06074.1-1"/>
    <property type="match status" value="1"/>
</dbReference>
<dbReference type="PANTHER" id="PTHR10884:SF14">
    <property type="entry name" value="NADH DEHYDROGENASE [UBIQUINONE] IRON-SULFUR PROTEIN 3, MITOCHONDRIAL"/>
    <property type="match status" value="1"/>
</dbReference>
<dbReference type="PANTHER" id="PTHR10884">
    <property type="entry name" value="NADH DEHYDROGENASE UBIQUINONE IRON-SULFUR PROTEIN 3"/>
    <property type="match status" value="1"/>
</dbReference>
<dbReference type="Pfam" id="PF00329">
    <property type="entry name" value="Complex1_30kDa"/>
    <property type="match status" value="1"/>
</dbReference>
<dbReference type="SUPFAM" id="SSF143243">
    <property type="entry name" value="Nqo5-like"/>
    <property type="match status" value="1"/>
</dbReference>
<dbReference type="PROSITE" id="PS00542">
    <property type="entry name" value="COMPLEX1_30K"/>
    <property type="match status" value="1"/>
</dbReference>
<proteinExistence type="inferred from homology"/>
<comment type="function">
    <text evidence="1">NDH-1 shuttles electrons from NADH, via FMN and iron-sulfur (Fe-S) centers, to quinones in the respiratory chain. The immediate electron acceptor for the enzyme in this species is believed to be ubiquinone. Couples the redox reaction to proton translocation (for every two electrons transferred, four hydrogen ions are translocated across the cytoplasmic membrane), and thus conserves the redox energy in a proton gradient.</text>
</comment>
<comment type="catalytic activity">
    <reaction evidence="1">
        <text>a quinone + NADH + 5 H(+)(in) = a quinol + NAD(+) + 4 H(+)(out)</text>
        <dbReference type="Rhea" id="RHEA:57888"/>
        <dbReference type="ChEBI" id="CHEBI:15378"/>
        <dbReference type="ChEBI" id="CHEBI:24646"/>
        <dbReference type="ChEBI" id="CHEBI:57540"/>
        <dbReference type="ChEBI" id="CHEBI:57945"/>
        <dbReference type="ChEBI" id="CHEBI:132124"/>
    </reaction>
</comment>
<comment type="subunit">
    <text evidence="1">NDH-1 is composed of 14 different subunits. Subunits NuoB, C, D, E, F, and G constitute the peripheral sector of the complex.</text>
</comment>
<comment type="subcellular location">
    <subcellularLocation>
        <location evidence="1">Cell inner membrane</location>
        <topology evidence="1">Peripheral membrane protein</topology>
        <orientation evidence="1">Cytoplasmic side</orientation>
    </subcellularLocation>
</comment>
<comment type="similarity">
    <text evidence="1">Belongs to the complex I 30 kDa subunit family.</text>
</comment>
<evidence type="ECO:0000255" key="1">
    <source>
        <dbReference type="HAMAP-Rule" id="MF_01357"/>
    </source>
</evidence>
<feature type="chain" id="PRO_0000358145" description="NADH-quinone oxidoreductase subunit C">
    <location>
        <begin position="1"/>
        <end position="197"/>
    </location>
</feature>
<keyword id="KW-0997">Cell inner membrane</keyword>
<keyword id="KW-1003">Cell membrane</keyword>
<keyword id="KW-0472">Membrane</keyword>
<keyword id="KW-0520">NAD</keyword>
<keyword id="KW-0874">Quinone</keyword>
<keyword id="KW-1278">Translocase</keyword>
<keyword id="KW-0813">Transport</keyword>
<keyword id="KW-0830">Ubiquinone</keyword>